<organism>
    <name type="scientific">Heliobacterium modesticaldum (strain ATCC 51547 / Ice1)</name>
    <dbReference type="NCBI Taxonomy" id="498761"/>
    <lineage>
        <taxon>Bacteria</taxon>
        <taxon>Bacillati</taxon>
        <taxon>Bacillota</taxon>
        <taxon>Clostridia</taxon>
        <taxon>Eubacteriales</taxon>
        <taxon>Heliobacteriaceae</taxon>
        <taxon>Heliomicrobium</taxon>
    </lineage>
</organism>
<proteinExistence type="inferred from homology"/>
<reference key="1">
    <citation type="journal article" date="2008" name="J. Bacteriol.">
        <title>The genome of Heliobacterium modesticaldum, a phototrophic representative of the Firmicutes containing the simplest photosynthetic apparatus.</title>
        <authorList>
            <person name="Sattley W.M."/>
            <person name="Madigan M.T."/>
            <person name="Swingley W.D."/>
            <person name="Cheung P.C."/>
            <person name="Clocksin K.M."/>
            <person name="Conrad A.L."/>
            <person name="Dejesa L.C."/>
            <person name="Honchak B.M."/>
            <person name="Jung D.O."/>
            <person name="Karbach L.E."/>
            <person name="Kurdoglu A."/>
            <person name="Lahiri S."/>
            <person name="Mastrian S.D."/>
            <person name="Page L.E."/>
            <person name="Taylor H.L."/>
            <person name="Wang Z.T."/>
            <person name="Raymond J."/>
            <person name="Chen M."/>
            <person name="Blankenship R.E."/>
            <person name="Touchman J.W."/>
        </authorList>
    </citation>
    <scope>NUCLEOTIDE SEQUENCE [LARGE SCALE GENOMIC DNA]</scope>
    <source>
        <strain>ATCC 51547 / Ice1</strain>
    </source>
</reference>
<protein>
    <recommendedName>
        <fullName evidence="1">Large ribosomal subunit protein uL22</fullName>
    </recommendedName>
    <alternativeName>
        <fullName evidence="3">50S ribosomal protein L22</fullName>
    </alternativeName>
</protein>
<sequence>MEAKTAQAVAKYVRTSPRKVRQVIDLIRGKSVADAFAILKFTPVKSAADVAKVLKSAVANAEHNYEMNTADLYVQTCFVDQGPSMKRISPRAQGRADVIKKRMSHITVIVAEKPAKPAAAKKDPKAAAAKADANAGTKEG</sequence>
<keyword id="KW-1185">Reference proteome</keyword>
<keyword id="KW-0687">Ribonucleoprotein</keyword>
<keyword id="KW-0689">Ribosomal protein</keyword>
<keyword id="KW-0694">RNA-binding</keyword>
<keyword id="KW-0699">rRNA-binding</keyword>
<gene>
    <name evidence="1" type="primary">rplV</name>
    <name type="ordered locus">Helmi_13350</name>
    <name type="ORF">HM1_1383</name>
</gene>
<comment type="function">
    <text evidence="1">This protein binds specifically to 23S rRNA; its binding is stimulated by other ribosomal proteins, e.g. L4, L17, and L20. It is important during the early stages of 50S assembly. It makes multiple contacts with different domains of the 23S rRNA in the assembled 50S subunit and ribosome (By similarity).</text>
</comment>
<comment type="function">
    <text evidence="1">The globular domain of the protein is located near the polypeptide exit tunnel on the outside of the subunit, while an extended beta-hairpin is found that lines the wall of the exit tunnel in the center of the 70S ribosome.</text>
</comment>
<comment type="subunit">
    <text evidence="1">Part of the 50S ribosomal subunit.</text>
</comment>
<comment type="similarity">
    <text evidence="1">Belongs to the universal ribosomal protein uL22 family.</text>
</comment>
<name>RL22_HELMI</name>
<evidence type="ECO:0000255" key="1">
    <source>
        <dbReference type="HAMAP-Rule" id="MF_01331"/>
    </source>
</evidence>
<evidence type="ECO:0000256" key="2">
    <source>
        <dbReference type="SAM" id="MobiDB-lite"/>
    </source>
</evidence>
<evidence type="ECO:0000305" key="3"/>
<feature type="chain" id="PRO_0000354478" description="Large ribosomal subunit protein uL22">
    <location>
        <begin position="1"/>
        <end position="140"/>
    </location>
</feature>
<feature type="region of interest" description="Disordered" evidence="2">
    <location>
        <begin position="115"/>
        <end position="140"/>
    </location>
</feature>
<dbReference type="EMBL" id="CP000930">
    <property type="protein sequence ID" value="ABZ83960.1"/>
    <property type="molecule type" value="Genomic_DNA"/>
</dbReference>
<dbReference type="SMR" id="B0TC61"/>
<dbReference type="STRING" id="498761.HM1_1383"/>
<dbReference type="KEGG" id="hmo:HM1_1383"/>
<dbReference type="eggNOG" id="COG0091">
    <property type="taxonomic scope" value="Bacteria"/>
</dbReference>
<dbReference type="HOGENOM" id="CLU_083987_3_3_9"/>
<dbReference type="OrthoDB" id="9805969at2"/>
<dbReference type="Proteomes" id="UP000008550">
    <property type="component" value="Chromosome"/>
</dbReference>
<dbReference type="GO" id="GO:0022625">
    <property type="term" value="C:cytosolic large ribosomal subunit"/>
    <property type="evidence" value="ECO:0007669"/>
    <property type="project" value="TreeGrafter"/>
</dbReference>
<dbReference type="GO" id="GO:0019843">
    <property type="term" value="F:rRNA binding"/>
    <property type="evidence" value="ECO:0007669"/>
    <property type="project" value="UniProtKB-UniRule"/>
</dbReference>
<dbReference type="GO" id="GO:0003735">
    <property type="term" value="F:structural constituent of ribosome"/>
    <property type="evidence" value="ECO:0007669"/>
    <property type="project" value="InterPro"/>
</dbReference>
<dbReference type="GO" id="GO:0006412">
    <property type="term" value="P:translation"/>
    <property type="evidence" value="ECO:0007669"/>
    <property type="project" value="UniProtKB-UniRule"/>
</dbReference>
<dbReference type="CDD" id="cd00336">
    <property type="entry name" value="Ribosomal_L22"/>
    <property type="match status" value="1"/>
</dbReference>
<dbReference type="FunFam" id="3.90.470.10:FF:000011">
    <property type="entry name" value="50S ribosomal protein L22"/>
    <property type="match status" value="1"/>
</dbReference>
<dbReference type="Gene3D" id="3.90.470.10">
    <property type="entry name" value="Ribosomal protein L22/L17"/>
    <property type="match status" value="1"/>
</dbReference>
<dbReference type="HAMAP" id="MF_01331_B">
    <property type="entry name" value="Ribosomal_uL22_B"/>
    <property type="match status" value="1"/>
</dbReference>
<dbReference type="InterPro" id="IPR001063">
    <property type="entry name" value="Ribosomal_uL22"/>
</dbReference>
<dbReference type="InterPro" id="IPR005727">
    <property type="entry name" value="Ribosomal_uL22_bac/chlpt-type"/>
</dbReference>
<dbReference type="InterPro" id="IPR047867">
    <property type="entry name" value="Ribosomal_uL22_bac/org-type"/>
</dbReference>
<dbReference type="InterPro" id="IPR018260">
    <property type="entry name" value="Ribosomal_uL22_CS"/>
</dbReference>
<dbReference type="InterPro" id="IPR036394">
    <property type="entry name" value="Ribosomal_uL22_sf"/>
</dbReference>
<dbReference type="NCBIfam" id="TIGR01044">
    <property type="entry name" value="rplV_bact"/>
    <property type="match status" value="1"/>
</dbReference>
<dbReference type="PANTHER" id="PTHR13501">
    <property type="entry name" value="CHLOROPLAST 50S RIBOSOMAL PROTEIN L22-RELATED"/>
    <property type="match status" value="1"/>
</dbReference>
<dbReference type="PANTHER" id="PTHR13501:SF8">
    <property type="entry name" value="LARGE RIBOSOMAL SUBUNIT PROTEIN UL22M"/>
    <property type="match status" value="1"/>
</dbReference>
<dbReference type="Pfam" id="PF00237">
    <property type="entry name" value="Ribosomal_L22"/>
    <property type="match status" value="1"/>
</dbReference>
<dbReference type="SUPFAM" id="SSF54843">
    <property type="entry name" value="Ribosomal protein L22"/>
    <property type="match status" value="1"/>
</dbReference>
<dbReference type="PROSITE" id="PS00464">
    <property type="entry name" value="RIBOSOMAL_L22"/>
    <property type="match status" value="1"/>
</dbReference>
<accession>B0TC61</accession>